<accession>A1E9V5</accession>
<geneLocation type="chloroplast"/>
<sequence length="160" mass="17517">MGVTKKPDLNDPVLRAKLAKGMGHNYYGEPAWPNDLLYIFPVVILGTIACNVGLAVLEPSMIGEPADPFATPLEILPEWYFFPVFQILRTVPNKLLGVLLMVSVPTGLLTVPFLENVNKFQNPFRRPVATTVFLIGTVVALWLGIGATLPIDKSLTLGLF</sequence>
<comment type="function">
    <text evidence="2">Component of the cytochrome b6-f complex, which mediates electron transfer between photosystem II (PSII) and photosystem I (PSI), cyclic electron flow around PSI, and state transitions.</text>
</comment>
<comment type="subunit">
    <text evidence="1">The 4 large subunits of the cytochrome b6-f complex are cytochrome b6, subunit IV (17 kDa polypeptide, petD), cytochrome f and the Rieske protein, while the 4 small subunits are petG, petL, petM and petN. The complex functions as a dimer (By similarity).</text>
</comment>
<comment type="subcellular location">
    <subcellularLocation>
        <location evidence="2">Plastid</location>
        <location evidence="2">Chloroplast thylakoid membrane</location>
        <topology evidence="2">Multi-pass membrane protein</topology>
    </subcellularLocation>
</comment>
<comment type="similarity">
    <text evidence="2">Belongs to the cytochrome b family. PetD subfamily.</text>
</comment>
<organism>
    <name type="scientific">Sorghum bicolor</name>
    <name type="common">Sorghum</name>
    <name type="synonym">Sorghum vulgare</name>
    <dbReference type="NCBI Taxonomy" id="4558"/>
    <lineage>
        <taxon>Eukaryota</taxon>
        <taxon>Viridiplantae</taxon>
        <taxon>Streptophyta</taxon>
        <taxon>Embryophyta</taxon>
        <taxon>Tracheophyta</taxon>
        <taxon>Spermatophyta</taxon>
        <taxon>Magnoliopsida</taxon>
        <taxon>Liliopsida</taxon>
        <taxon>Poales</taxon>
        <taxon>Poaceae</taxon>
        <taxon>PACMAD clade</taxon>
        <taxon>Panicoideae</taxon>
        <taxon>Andropogonodae</taxon>
        <taxon>Andropogoneae</taxon>
        <taxon>Sorghinae</taxon>
        <taxon>Sorghum</taxon>
    </lineage>
</organism>
<dbReference type="EMBL" id="EF115542">
    <property type="protein sequence ID" value="ABK79526.1"/>
    <property type="molecule type" value="Genomic_DNA"/>
</dbReference>
<dbReference type="RefSeq" id="YP_899438.1">
    <property type="nucleotide sequence ID" value="NC_008602.1"/>
</dbReference>
<dbReference type="SMR" id="A1E9V5"/>
<dbReference type="FunCoup" id="A1E9V5">
    <property type="interactions" value="369"/>
</dbReference>
<dbReference type="STRING" id="4558.A1E9V5"/>
<dbReference type="GeneID" id="4549222"/>
<dbReference type="KEGG" id="sbi:4549222"/>
<dbReference type="eggNOG" id="KOG4663">
    <property type="taxonomic scope" value="Eukaryota"/>
</dbReference>
<dbReference type="HOGENOM" id="CLU_112652_0_0_1"/>
<dbReference type="InParanoid" id="A1E9V5"/>
<dbReference type="OrthoDB" id="726321at2759"/>
<dbReference type="Proteomes" id="UP000000768">
    <property type="component" value="Chloroplast"/>
</dbReference>
<dbReference type="ExpressionAtlas" id="A1E9V5">
    <property type="expression patterns" value="baseline and differential"/>
</dbReference>
<dbReference type="GO" id="GO:0009535">
    <property type="term" value="C:chloroplast thylakoid membrane"/>
    <property type="evidence" value="ECO:0007669"/>
    <property type="project" value="UniProtKB-SubCell"/>
</dbReference>
<dbReference type="GO" id="GO:0045158">
    <property type="term" value="F:electron transporter, transferring electrons within cytochrome b6/f complex of photosystem II activity"/>
    <property type="evidence" value="ECO:0007669"/>
    <property type="project" value="UniProtKB-UniRule"/>
</dbReference>
<dbReference type="GO" id="GO:0045156">
    <property type="term" value="F:electron transporter, transferring electrons within the cyclic electron transport pathway of photosynthesis activity"/>
    <property type="evidence" value="ECO:0007669"/>
    <property type="project" value="InterPro"/>
</dbReference>
<dbReference type="GO" id="GO:0016491">
    <property type="term" value="F:oxidoreductase activity"/>
    <property type="evidence" value="ECO:0007669"/>
    <property type="project" value="InterPro"/>
</dbReference>
<dbReference type="GO" id="GO:0009767">
    <property type="term" value="P:photosynthetic electron transport chain"/>
    <property type="evidence" value="ECO:0007669"/>
    <property type="project" value="InterPro"/>
</dbReference>
<dbReference type="CDD" id="cd00290">
    <property type="entry name" value="cytochrome_b_C"/>
    <property type="match status" value="1"/>
</dbReference>
<dbReference type="FunFam" id="1.10.287.980:FF:000001">
    <property type="entry name" value="Cytochrome b6-f complex subunit 4"/>
    <property type="match status" value="1"/>
</dbReference>
<dbReference type="FunFam" id="1.20.5.510:FF:000002">
    <property type="entry name" value="Cytochrome b6-f complex subunit 4"/>
    <property type="match status" value="1"/>
</dbReference>
<dbReference type="Gene3D" id="1.10.287.980">
    <property type="entry name" value="plastocyanin oxidoreductase"/>
    <property type="match status" value="1"/>
</dbReference>
<dbReference type="Gene3D" id="1.20.5.510">
    <property type="entry name" value="Single helix bin"/>
    <property type="match status" value="1"/>
</dbReference>
<dbReference type="HAMAP" id="MF_01344">
    <property type="entry name" value="Cytb6_f_subIV"/>
    <property type="match status" value="1"/>
</dbReference>
<dbReference type="InterPro" id="IPR005798">
    <property type="entry name" value="Cyt_b/b6_C"/>
</dbReference>
<dbReference type="InterPro" id="IPR036150">
    <property type="entry name" value="Cyt_b/b6_C_sf"/>
</dbReference>
<dbReference type="InterPro" id="IPR005870">
    <property type="entry name" value="Cyt_b6/f_cplx_suIV"/>
</dbReference>
<dbReference type="InterPro" id="IPR048260">
    <property type="entry name" value="Cytochrome_b_C_euk/bac"/>
</dbReference>
<dbReference type="NCBIfam" id="TIGR01156">
    <property type="entry name" value="cytb6_f_IV"/>
    <property type="match status" value="1"/>
</dbReference>
<dbReference type="PANTHER" id="PTHR19271">
    <property type="entry name" value="CYTOCHROME B"/>
    <property type="match status" value="1"/>
</dbReference>
<dbReference type="PANTHER" id="PTHR19271:SF40">
    <property type="entry name" value="CYTOCHROME B"/>
    <property type="match status" value="1"/>
</dbReference>
<dbReference type="Pfam" id="PF00032">
    <property type="entry name" value="Cytochrom_B_C"/>
    <property type="match status" value="1"/>
</dbReference>
<dbReference type="PIRSF" id="PIRSF000033">
    <property type="entry name" value="B6f_17K"/>
    <property type="match status" value="1"/>
</dbReference>
<dbReference type="SUPFAM" id="SSF81648">
    <property type="entry name" value="a domain/subunit of cytochrome bc1 complex (Ubiquinol-cytochrome c reductase)"/>
    <property type="match status" value="1"/>
</dbReference>
<dbReference type="PROSITE" id="PS51003">
    <property type="entry name" value="CYTB_CTER"/>
    <property type="match status" value="1"/>
</dbReference>
<reference key="1">
    <citation type="journal article" date="2007" name="Theor. Appl. Genet.">
        <title>Complete chloroplast genome sequences of Hordeum vulgare, Sorghum bicolor and Agrostis stolonifera, and comparative analyses with other grass genomes.</title>
        <authorList>
            <person name="Saski C."/>
            <person name="Lee S.-B."/>
            <person name="Fjellheim S."/>
            <person name="Guda C."/>
            <person name="Jansen R.K."/>
            <person name="Luo H."/>
            <person name="Tomkins J."/>
            <person name="Rognli O.A."/>
            <person name="Daniell H."/>
            <person name="Clarke J.L."/>
        </authorList>
    </citation>
    <scope>NUCLEOTIDE SEQUENCE [LARGE SCALE GENOMIC DNA]</scope>
    <source>
        <strain>cv. BTx623</strain>
    </source>
</reference>
<name>PETD_SORBI</name>
<keyword id="KW-0150">Chloroplast</keyword>
<keyword id="KW-0249">Electron transport</keyword>
<keyword id="KW-0472">Membrane</keyword>
<keyword id="KW-0602">Photosynthesis</keyword>
<keyword id="KW-0934">Plastid</keyword>
<keyword id="KW-1185">Reference proteome</keyword>
<keyword id="KW-0793">Thylakoid</keyword>
<keyword id="KW-0812">Transmembrane</keyword>
<keyword id="KW-1133">Transmembrane helix</keyword>
<keyword id="KW-0813">Transport</keyword>
<protein>
    <recommendedName>
        <fullName evidence="2">Cytochrome b6-f complex subunit 4</fullName>
    </recommendedName>
    <alternativeName>
        <fullName evidence="2">17 kDa polypeptide</fullName>
    </alternativeName>
</protein>
<feature type="chain" id="PRO_0000276544" description="Cytochrome b6-f complex subunit 4">
    <location>
        <begin position="1"/>
        <end position="160"/>
    </location>
</feature>
<feature type="transmembrane region" description="Helical" evidence="2">
    <location>
        <begin position="36"/>
        <end position="56"/>
    </location>
</feature>
<feature type="transmembrane region" description="Helical" evidence="2">
    <location>
        <begin position="95"/>
        <end position="115"/>
    </location>
</feature>
<feature type="transmembrane region" description="Helical" evidence="2">
    <location>
        <begin position="131"/>
        <end position="151"/>
    </location>
</feature>
<evidence type="ECO:0000250" key="1"/>
<evidence type="ECO:0000255" key="2">
    <source>
        <dbReference type="HAMAP-Rule" id="MF_01344"/>
    </source>
</evidence>
<gene>
    <name evidence="2" type="primary">petD</name>
</gene>
<proteinExistence type="inferred from homology"/>